<dbReference type="EMBL" id="M86652">
    <property type="protein sequence ID" value="AAA42811.1"/>
    <property type="molecule type" value="mRNA"/>
</dbReference>
<dbReference type="PIR" id="A44049">
    <property type="entry name" value="P1NZB2"/>
</dbReference>
<dbReference type="SMR" id="P32554"/>
<dbReference type="GlyCosmos" id="P32554">
    <property type="glycosylation" value="1 site, No reported glycans"/>
</dbReference>
<dbReference type="GO" id="GO:0044167">
    <property type="term" value="C:host cell endoplasmic reticulum membrane"/>
    <property type="evidence" value="ECO:0007669"/>
    <property type="project" value="UniProtKB-SubCell"/>
</dbReference>
<dbReference type="GO" id="GO:0044178">
    <property type="term" value="C:host cell Golgi membrane"/>
    <property type="evidence" value="ECO:0007669"/>
    <property type="project" value="UniProtKB-SubCell"/>
</dbReference>
<dbReference type="GO" id="GO:0020002">
    <property type="term" value="C:host cell plasma membrane"/>
    <property type="evidence" value="ECO:0007669"/>
    <property type="project" value="UniProtKB-SubCell"/>
</dbReference>
<dbReference type="GO" id="GO:0016020">
    <property type="term" value="C:membrane"/>
    <property type="evidence" value="ECO:0007669"/>
    <property type="project" value="UniProtKB-KW"/>
</dbReference>
<dbReference type="GO" id="GO:0055036">
    <property type="term" value="C:virion membrane"/>
    <property type="evidence" value="ECO:0007669"/>
    <property type="project" value="UniProtKB-SubCell"/>
</dbReference>
<dbReference type="GO" id="GO:1902600">
    <property type="term" value="P:proton transmembrane transport"/>
    <property type="evidence" value="ECO:0007669"/>
    <property type="project" value="UniProtKB-KW"/>
</dbReference>
<dbReference type="InterPro" id="IPR005327">
    <property type="entry name" value="SHP"/>
</dbReference>
<dbReference type="Pfam" id="PF03579">
    <property type="entry name" value="SHP"/>
    <property type="match status" value="1"/>
</dbReference>
<feature type="chain" id="PRO_0000142865" description="Small hydrophobic protein">
    <location>
        <begin position="1"/>
        <end position="81"/>
    </location>
</feature>
<feature type="topological domain" description="Intravirion" evidence="2">
    <location>
        <begin position="1"/>
        <end position="19"/>
    </location>
</feature>
<feature type="transmembrane region" description="Helical; Signal-anchor for type II membrane protein" evidence="2">
    <location>
        <begin position="20"/>
        <end position="40"/>
    </location>
</feature>
<feature type="topological domain" description="Virion surface" evidence="2">
    <location>
        <begin position="41"/>
        <end position="81"/>
    </location>
</feature>
<feature type="glycosylation site" description="N-linked (GlcNAc...) asparagine; by host" evidence="2">
    <location>
        <position position="77"/>
    </location>
</feature>
<name>SH_BRSV3</name>
<evidence type="ECO:0000250" key="1">
    <source>
        <dbReference type="UniProtKB" id="P0DOE5"/>
    </source>
</evidence>
<evidence type="ECO:0000255" key="2"/>
<evidence type="ECO:0000305" key="3"/>
<organismHost>
    <name type="scientific">Bos taurus</name>
    <name type="common">Bovine</name>
    <dbReference type="NCBI Taxonomy" id="9913"/>
</organismHost>
<comment type="function">
    <text evidence="1">Viroporin that forms a homopentameric ion channel displaying low ion selectivity. May play a role in virus morphogenesis and pathogenicity at various stages of the viral life cycle. Accumulates at the membrane of the Golgi apparatus in infected cells and may facilitate virus release by modifying the secretory pathway. May enhance host membrane permeability and disrupt cellular ion homeostasis, which can be sensed as damage-associated molecular patterns/danger signals, triggering NLRP3 inflammasome activation and inflammatory immune response. Also inhibits host TNFA-mediated signaling pathway and may delay apoptosis, allowing time for the virus to replicate.</text>
</comment>
<comment type="activity regulation">
    <text evidence="1">Channel activity is inhibited by copper. Also inhibited by small-molecule pyronin B.</text>
</comment>
<comment type="subunit">
    <text evidence="1">Homopentamer forming a funnel-like pore. Interacts with glycoprotein G; this interaction occurs on the surface of virion particles and infected cells. Interacts with host BCAP31 (via C-terminus); this interaction is direct.</text>
</comment>
<comment type="subcellular location">
    <subcellularLocation>
        <location evidence="1">Virion membrane</location>
        <topology evidence="1">Single-pass type II membrane protein</topology>
    </subcellularLocation>
    <subcellularLocation>
        <location evidence="1">Host cell membrane</location>
        <topology evidence="1">Single-pass type II membrane protein</topology>
    </subcellularLocation>
    <subcellularLocation>
        <location evidence="1">Host Golgi apparatus membrane</location>
        <topology evidence="1">Single-pass type II membrane protein</topology>
    </subcellularLocation>
    <subcellularLocation>
        <location evidence="1">Host endoplasmic reticulum membrane</location>
        <topology evidence="1">Single-pass type II membrane protein</topology>
    </subcellularLocation>
    <text evidence="1">Present in very small amount in the virion. Detected in lipid rafts of host Golgi apparatus membrane.</text>
</comment>
<comment type="PTM">
    <text evidence="1">Four species of SH have been detected in infected cell cytoplasm: a 7.5 kDa non-glycosylated form (SH0), a 13-15 kDa form that contains one or two N-linked carbohydrate side chains of the high-mannose type (SHg), a 21-30 kDa polylactosaminoglycan-modified form of the protein (SHp), and the isoform generated by alternative translational initiation. Of these different forms, SH0 is by far the most abundant protein detected during virus infection.</text>
</comment>
<comment type="PTM">
    <text evidence="1">Tyrosine phosphorylated.</text>
</comment>
<comment type="similarity">
    <text evidence="3">Belongs to the orthopneumovirus small hydrophobic protein family.</text>
</comment>
<sequence length="81" mass="9306">MNSTSTIIEFTGEFWTYFTLVFMMLTIGFFFIVTSLVAAILNKLCDLNDHHTNSLDIRTKLRSDTQLITRAHEESINQSSN</sequence>
<reference key="1">
    <citation type="journal article" date="1992" name="Virology">
        <title>Polylactosaminoglycan modification of the respiratory syncytial virus small hydrophobic (SH) protein: a conserved feature among human and bovine respiratory syncytial viruses.</title>
        <authorList>
            <person name="Anderson K."/>
            <person name="King A.M.Q."/>
            <person name="Lerch R.A."/>
            <person name="Wertz G.W."/>
        </authorList>
    </citation>
    <scope>NUCLEOTIDE SEQUENCE [MRNA]</scope>
</reference>
<proteinExistence type="inferred from homology"/>
<keyword id="KW-0325">Glycoprotein</keyword>
<keyword id="KW-1032">Host cell membrane</keyword>
<keyword id="KW-1038">Host endoplasmic reticulum</keyword>
<keyword id="KW-1040">Host Golgi apparatus</keyword>
<keyword id="KW-1043">Host membrane</keyword>
<keyword id="KW-0375">Hydrogen ion transport</keyword>
<keyword id="KW-0406">Ion transport</keyword>
<keyword id="KW-0472">Membrane</keyword>
<keyword id="KW-0597">Phosphoprotein</keyword>
<keyword id="KW-0735">Signal-anchor</keyword>
<keyword id="KW-0812">Transmembrane</keyword>
<keyword id="KW-1133">Transmembrane helix</keyword>
<keyword id="KW-0813">Transport</keyword>
<keyword id="KW-0946">Virion</keyword>
<accession>P32554</accession>
<gene>
    <name type="primary">SH</name>
    <name type="synonym">1A</name>
</gene>
<protein>
    <recommendedName>
        <fullName>Small hydrophobic protein</fullName>
    </recommendedName>
    <alternativeName>
        <fullName>Small protein 1A</fullName>
    </alternativeName>
</protein>
<organism>
    <name type="scientific">Bovine respiratory syncytial virus (strain 391-2)</name>
    <name type="common">BRS</name>
    <dbReference type="NCBI Taxonomy" id="31611"/>
    <lineage>
        <taxon>Viruses</taxon>
        <taxon>Riboviria</taxon>
        <taxon>Orthornavirae</taxon>
        <taxon>Negarnaviricota</taxon>
        <taxon>Haploviricotina</taxon>
        <taxon>Monjiviricetes</taxon>
        <taxon>Mononegavirales</taxon>
        <taxon>Pneumoviridae</taxon>
        <taxon>Orthopneumovirus</taxon>
        <taxon>Orthopneumovirus bovis</taxon>
    </lineage>
</organism>